<reference key="1">
    <citation type="journal article" date="2006" name="J. Bacteriol.">
        <title>Complete genome sequence of Yersinia pestis strains Antiqua and Nepal516: evidence of gene reduction in an emerging pathogen.</title>
        <authorList>
            <person name="Chain P.S.G."/>
            <person name="Hu P."/>
            <person name="Malfatti S.A."/>
            <person name="Radnedge L."/>
            <person name="Larimer F."/>
            <person name="Vergez L.M."/>
            <person name="Worsham P."/>
            <person name="Chu M.C."/>
            <person name="Andersen G.L."/>
        </authorList>
    </citation>
    <scope>NUCLEOTIDE SEQUENCE [LARGE SCALE GENOMIC DNA]</scope>
    <source>
        <strain>Antiqua</strain>
    </source>
</reference>
<name>MRAY_YERPA</name>
<organism>
    <name type="scientific">Yersinia pestis bv. Antiqua (strain Antiqua)</name>
    <dbReference type="NCBI Taxonomy" id="360102"/>
    <lineage>
        <taxon>Bacteria</taxon>
        <taxon>Pseudomonadati</taxon>
        <taxon>Pseudomonadota</taxon>
        <taxon>Gammaproteobacteria</taxon>
        <taxon>Enterobacterales</taxon>
        <taxon>Yersiniaceae</taxon>
        <taxon>Yersinia</taxon>
    </lineage>
</organism>
<sequence length="360" mass="40077">MLVWLAEYLVKFYSGFNVFSYLTFRAIVSLLTALFISLWMGPHLIAWLQKLQIGQVVRNDGPESHFSKRGTPTMGGLMILFSITISVLMWAYPSNPYVWCVLFILIGYGIVGFIDDYRKVVRKNTKGLIARWKYFWQSIIALAAAFTMYSIGKDTSATELVVPFFKDIMPQLGLLYVLLAYFVIVGTSNAVNLTDGLDGLAIMPTVFVAAGFALVAWATGNVNFAAYLHIPYLRHAGELVIVCTAIVGAGLGFLWFNTYPAQVFMGDVGSLALGGALGTIAVLLRQEFLLVIMGGVFVVETLSVILQVGSFKLRGQRIFRMAPIHHHYELKGWPEPRVIVRFWIISLMLVLIGLATLKVR</sequence>
<protein>
    <recommendedName>
        <fullName evidence="1">Phospho-N-acetylmuramoyl-pentapeptide-transferase</fullName>
        <ecNumber evidence="1">2.7.8.13</ecNumber>
    </recommendedName>
    <alternativeName>
        <fullName evidence="1">UDP-MurNAc-pentapeptide phosphotransferase</fullName>
    </alternativeName>
</protein>
<evidence type="ECO:0000255" key="1">
    <source>
        <dbReference type="HAMAP-Rule" id="MF_00038"/>
    </source>
</evidence>
<keyword id="KW-0131">Cell cycle</keyword>
<keyword id="KW-0132">Cell division</keyword>
<keyword id="KW-0997">Cell inner membrane</keyword>
<keyword id="KW-1003">Cell membrane</keyword>
<keyword id="KW-0133">Cell shape</keyword>
<keyword id="KW-0961">Cell wall biogenesis/degradation</keyword>
<keyword id="KW-0460">Magnesium</keyword>
<keyword id="KW-0472">Membrane</keyword>
<keyword id="KW-0479">Metal-binding</keyword>
<keyword id="KW-0573">Peptidoglycan synthesis</keyword>
<keyword id="KW-0808">Transferase</keyword>
<keyword id="KW-0812">Transmembrane</keyword>
<keyword id="KW-1133">Transmembrane helix</keyword>
<proteinExistence type="inferred from homology"/>
<feature type="chain" id="PRO_1000003088" description="Phospho-N-acetylmuramoyl-pentapeptide-transferase">
    <location>
        <begin position="1"/>
        <end position="360"/>
    </location>
</feature>
<feature type="transmembrane region" description="Helical" evidence="1">
    <location>
        <begin position="27"/>
        <end position="47"/>
    </location>
</feature>
<feature type="transmembrane region" description="Helical" evidence="1">
    <location>
        <begin position="72"/>
        <end position="92"/>
    </location>
</feature>
<feature type="transmembrane region" description="Helical" evidence="1">
    <location>
        <begin position="94"/>
        <end position="114"/>
    </location>
</feature>
<feature type="transmembrane region" description="Helical" evidence="1">
    <location>
        <begin position="132"/>
        <end position="152"/>
    </location>
</feature>
<feature type="transmembrane region" description="Helical" evidence="1">
    <location>
        <begin position="168"/>
        <end position="188"/>
    </location>
</feature>
<feature type="transmembrane region" description="Helical" evidence="1">
    <location>
        <begin position="199"/>
        <end position="219"/>
    </location>
</feature>
<feature type="transmembrane region" description="Helical" evidence="1">
    <location>
        <begin position="236"/>
        <end position="256"/>
    </location>
</feature>
<feature type="transmembrane region" description="Helical" evidence="1">
    <location>
        <begin position="263"/>
        <end position="283"/>
    </location>
</feature>
<feature type="transmembrane region" description="Helical" evidence="1">
    <location>
        <begin position="288"/>
        <end position="308"/>
    </location>
</feature>
<feature type="transmembrane region" description="Helical" evidence="1">
    <location>
        <begin position="338"/>
        <end position="358"/>
    </location>
</feature>
<comment type="function">
    <text evidence="1">Catalyzes the initial step of the lipid cycle reactions in the biosynthesis of the cell wall peptidoglycan: transfers peptidoglycan precursor phospho-MurNAc-pentapeptide from UDP-MurNAc-pentapeptide onto the lipid carrier undecaprenyl phosphate, yielding undecaprenyl-pyrophosphoryl-MurNAc-pentapeptide, known as lipid I.</text>
</comment>
<comment type="catalytic activity">
    <reaction evidence="1">
        <text>UDP-N-acetyl-alpha-D-muramoyl-L-alanyl-gamma-D-glutamyl-meso-2,6-diaminopimeloyl-D-alanyl-D-alanine + di-trans,octa-cis-undecaprenyl phosphate = di-trans,octa-cis-undecaprenyl diphospho-N-acetyl-alpha-D-muramoyl-L-alanyl-D-glutamyl-meso-2,6-diaminopimeloyl-D-alanyl-D-alanine + UMP</text>
        <dbReference type="Rhea" id="RHEA:28386"/>
        <dbReference type="ChEBI" id="CHEBI:57865"/>
        <dbReference type="ChEBI" id="CHEBI:60392"/>
        <dbReference type="ChEBI" id="CHEBI:61386"/>
        <dbReference type="ChEBI" id="CHEBI:61387"/>
        <dbReference type="EC" id="2.7.8.13"/>
    </reaction>
</comment>
<comment type="cofactor">
    <cofactor evidence="1">
        <name>Mg(2+)</name>
        <dbReference type="ChEBI" id="CHEBI:18420"/>
    </cofactor>
</comment>
<comment type="pathway">
    <text evidence="1">Cell wall biogenesis; peptidoglycan biosynthesis.</text>
</comment>
<comment type="subcellular location">
    <subcellularLocation>
        <location evidence="1">Cell inner membrane</location>
        <topology evidence="1">Multi-pass membrane protein</topology>
    </subcellularLocation>
</comment>
<comment type="similarity">
    <text evidence="1">Belongs to the glycosyltransferase 4 family. MraY subfamily.</text>
</comment>
<gene>
    <name evidence="1" type="primary">mraY</name>
    <name type="ordered locus">YPA_3549</name>
</gene>
<accession>Q1C211</accession>
<dbReference type="EC" id="2.7.8.13" evidence="1"/>
<dbReference type="EMBL" id="CP000308">
    <property type="protein sequence ID" value="ABG15511.1"/>
    <property type="molecule type" value="Genomic_DNA"/>
</dbReference>
<dbReference type="RefSeq" id="WP_002210437.1">
    <property type="nucleotide sequence ID" value="NZ_CP009906.1"/>
</dbReference>
<dbReference type="SMR" id="Q1C211"/>
<dbReference type="GeneID" id="57974063"/>
<dbReference type="KEGG" id="ypa:YPA_3549"/>
<dbReference type="UniPathway" id="UPA00219"/>
<dbReference type="Proteomes" id="UP000001971">
    <property type="component" value="Chromosome"/>
</dbReference>
<dbReference type="GO" id="GO:0005886">
    <property type="term" value="C:plasma membrane"/>
    <property type="evidence" value="ECO:0007669"/>
    <property type="project" value="UniProtKB-SubCell"/>
</dbReference>
<dbReference type="GO" id="GO:0046872">
    <property type="term" value="F:metal ion binding"/>
    <property type="evidence" value="ECO:0007669"/>
    <property type="project" value="UniProtKB-KW"/>
</dbReference>
<dbReference type="GO" id="GO:0008963">
    <property type="term" value="F:phospho-N-acetylmuramoyl-pentapeptide-transferase activity"/>
    <property type="evidence" value="ECO:0007669"/>
    <property type="project" value="UniProtKB-UniRule"/>
</dbReference>
<dbReference type="GO" id="GO:0051992">
    <property type="term" value="F:UDP-N-acetylmuramoyl-L-alanyl-D-glutamyl-meso-2,6-diaminopimelyl-D-alanyl-D-alanine:undecaprenyl-phosphate transferase activity"/>
    <property type="evidence" value="ECO:0007669"/>
    <property type="project" value="RHEA"/>
</dbReference>
<dbReference type="GO" id="GO:0051301">
    <property type="term" value="P:cell division"/>
    <property type="evidence" value="ECO:0007669"/>
    <property type="project" value="UniProtKB-KW"/>
</dbReference>
<dbReference type="GO" id="GO:0071555">
    <property type="term" value="P:cell wall organization"/>
    <property type="evidence" value="ECO:0007669"/>
    <property type="project" value="UniProtKB-KW"/>
</dbReference>
<dbReference type="GO" id="GO:0009252">
    <property type="term" value="P:peptidoglycan biosynthetic process"/>
    <property type="evidence" value="ECO:0007669"/>
    <property type="project" value="UniProtKB-UniRule"/>
</dbReference>
<dbReference type="GO" id="GO:0008360">
    <property type="term" value="P:regulation of cell shape"/>
    <property type="evidence" value="ECO:0007669"/>
    <property type="project" value="UniProtKB-KW"/>
</dbReference>
<dbReference type="CDD" id="cd06852">
    <property type="entry name" value="GT_MraY"/>
    <property type="match status" value="1"/>
</dbReference>
<dbReference type="HAMAP" id="MF_00038">
    <property type="entry name" value="MraY"/>
    <property type="match status" value="1"/>
</dbReference>
<dbReference type="InterPro" id="IPR000715">
    <property type="entry name" value="Glycosyl_transferase_4"/>
</dbReference>
<dbReference type="InterPro" id="IPR003524">
    <property type="entry name" value="PNAcMuramoyl-5peptid_Trfase"/>
</dbReference>
<dbReference type="InterPro" id="IPR018480">
    <property type="entry name" value="PNAcMuramoyl-5peptid_Trfase_CS"/>
</dbReference>
<dbReference type="NCBIfam" id="TIGR00445">
    <property type="entry name" value="mraY"/>
    <property type="match status" value="1"/>
</dbReference>
<dbReference type="PANTHER" id="PTHR22926">
    <property type="entry name" value="PHOSPHO-N-ACETYLMURAMOYL-PENTAPEPTIDE-TRANSFERASE"/>
    <property type="match status" value="1"/>
</dbReference>
<dbReference type="PANTHER" id="PTHR22926:SF5">
    <property type="entry name" value="PHOSPHO-N-ACETYLMURAMOYL-PENTAPEPTIDE-TRANSFERASE HOMOLOG"/>
    <property type="match status" value="1"/>
</dbReference>
<dbReference type="Pfam" id="PF00953">
    <property type="entry name" value="Glycos_transf_4"/>
    <property type="match status" value="1"/>
</dbReference>
<dbReference type="Pfam" id="PF10555">
    <property type="entry name" value="MraY_sig1"/>
    <property type="match status" value="1"/>
</dbReference>
<dbReference type="PROSITE" id="PS01347">
    <property type="entry name" value="MRAY_1"/>
    <property type="match status" value="1"/>
</dbReference>
<dbReference type="PROSITE" id="PS01348">
    <property type="entry name" value="MRAY_2"/>
    <property type="match status" value="1"/>
</dbReference>